<comment type="function">
    <text evidence="1">Catalyzes the NAD-dependent reduction of succinylglutamate semialdehyde into succinylglutamate.</text>
</comment>
<comment type="catalytic activity">
    <reaction>
        <text>N-succinyl-L-glutamate 5-semialdehyde + NAD(+) + H2O = N-succinyl-L-glutamate + NADH + 2 H(+)</text>
        <dbReference type="Rhea" id="RHEA:10812"/>
        <dbReference type="ChEBI" id="CHEBI:15377"/>
        <dbReference type="ChEBI" id="CHEBI:15378"/>
        <dbReference type="ChEBI" id="CHEBI:57540"/>
        <dbReference type="ChEBI" id="CHEBI:57945"/>
        <dbReference type="ChEBI" id="CHEBI:58520"/>
        <dbReference type="ChEBI" id="CHEBI:58763"/>
        <dbReference type="EC" id="1.2.1.71"/>
    </reaction>
</comment>
<comment type="pathway">
    <text evidence="2">Amino-acid degradation; L-arginine degradation via AST pathway; L-glutamate and succinate from L-arginine: step 4/5.</text>
</comment>
<comment type="induction">
    <text evidence="2">By arginine, under the control of ArgR.</text>
</comment>
<comment type="similarity">
    <text evidence="3">Belongs to the aldehyde dehydrogenase family. AstD subfamily.</text>
</comment>
<comment type="sequence caution" evidence="3">
    <conflict type="erroneous initiation">
        <sequence resource="EMBL-CDS" id="AAC46012"/>
    </conflict>
</comment>
<comment type="sequence caution" evidence="3">
    <conflict type="erroneous initiation">
        <sequence resource="EMBL-CDS" id="AAG04287"/>
    </conflict>
</comment>
<gene>
    <name type="primary">astD</name>
    <name type="synonym">aruD</name>
    <name type="ordered locus">PA0898</name>
</gene>
<reference key="1">
    <citation type="journal article" date="1997" name="J. Bacteriol.">
        <title>Cloning and characterization of the aru genes encoding enzymes of the catabolic arginine succinyltransferase pathway in Pseudomonas aeruginosa.</title>
        <authorList>
            <person name="Itoh Y."/>
        </authorList>
    </citation>
    <scope>NUCLEOTIDE SEQUENCE [GENOMIC DNA]</scope>
    <scope>INDUCTION</scope>
    <scope>PATHWAY</scope>
    <source>
        <strain>ATCC 15692 / DSM 22644 / CIP 104116 / JCM 14847 / LMG 12228 / 1C / PRS 101 / PAO1</strain>
    </source>
</reference>
<reference key="2">
    <citation type="journal article" date="2000" name="Nature">
        <title>Complete genome sequence of Pseudomonas aeruginosa PAO1, an opportunistic pathogen.</title>
        <authorList>
            <person name="Stover C.K."/>
            <person name="Pham X.-Q.T."/>
            <person name="Erwin A.L."/>
            <person name="Mizoguchi S.D."/>
            <person name="Warrener P."/>
            <person name="Hickey M.J."/>
            <person name="Brinkman F.S.L."/>
            <person name="Hufnagle W.O."/>
            <person name="Kowalik D.J."/>
            <person name="Lagrou M."/>
            <person name="Garber R.L."/>
            <person name="Goltry L."/>
            <person name="Tolentino E."/>
            <person name="Westbrock-Wadman S."/>
            <person name="Yuan Y."/>
            <person name="Brody L.L."/>
            <person name="Coulter S.N."/>
            <person name="Folger K.R."/>
            <person name="Kas A."/>
            <person name="Larbig K."/>
            <person name="Lim R.M."/>
            <person name="Smith K.A."/>
            <person name="Spencer D.H."/>
            <person name="Wong G.K.-S."/>
            <person name="Wu Z."/>
            <person name="Paulsen I.T."/>
            <person name="Reizer J."/>
            <person name="Saier M.H. Jr."/>
            <person name="Hancock R.E.W."/>
            <person name="Lory S."/>
            <person name="Olson M.V."/>
        </authorList>
    </citation>
    <scope>NUCLEOTIDE SEQUENCE [LARGE SCALE GENOMIC DNA]</scope>
    <source>
        <strain>ATCC 15692 / DSM 22644 / CIP 104116 / JCM 14847 / LMG 12228 / 1C / PRS 101 / PAO1</strain>
    </source>
</reference>
<dbReference type="EC" id="1.2.1.71"/>
<dbReference type="EMBL" id="AF011922">
    <property type="protein sequence ID" value="AAC46012.1"/>
    <property type="status" value="ALT_INIT"/>
    <property type="molecule type" value="Genomic_DNA"/>
</dbReference>
<dbReference type="EMBL" id="AE004091">
    <property type="protein sequence ID" value="AAG04287.1"/>
    <property type="status" value="ALT_INIT"/>
    <property type="molecule type" value="Genomic_DNA"/>
</dbReference>
<dbReference type="PIR" id="C83533">
    <property type="entry name" value="C83533"/>
</dbReference>
<dbReference type="RefSeq" id="NP_249589.1">
    <property type="nucleotide sequence ID" value="NC_002516.2"/>
</dbReference>
<dbReference type="PDB" id="3JU8">
    <property type="method" value="X-ray"/>
    <property type="resolution" value="1.82 A"/>
    <property type="chains" value="A/B=1-486"/>
</dbReference>
<dbReference type="PDBsum" id="3JU8"/>
<dbReference type="SMR" id="O50174"/>
<dbReference type="FunCoup" id="O50174">
    <property type="interactions" value="24"/>
</dbReference>
<dbReference type="STRING" id="208964.PA0898"/>
<dbReference type="PaxDb" id="208964-PA0898"/>
<dbReference type="GeneID" id="883040"/>
<dbReference type="KEGG" id="pae:PA0898"/>
<dbReference type="PATRIC" id="fig|208964.12.peg.933"/>
<dbReference type="PseudoCAP" id="PA0898"/>
<dbReference type="HOGENOM" id="CLU_005391_1_0_6"/>
<dbReference type="InParanoid" id="O50174"/>
<dbReference type="OrthoDB" id="9812625at2"/>
<dbReference type="PhylomeDB" id="O50174"/>
<dbReference type="UniPathway" id="UPA00185">
    <property type="reaction ID" value="UER00282"/>
</dbReference>
<dbReference type="EvolutionaryTrace" id="O50174"/>
<dbReference type="Proteomes" id="UP000002438">
    <property type="component" value="Chromosome"/>
</dbReference>
<dbReference type="GO" id="GO:0043824">
    <property type="term" value="F:succinylglutamate-semialdehyde dehydrogenase activity"/>
    <property type="evidence" value="ECO:0007669"/>
    <property type="project" value="UniProtKB-EC"/>
</dbReference>
<dbReference type="GO" id="GO:0006527">
    <property type="term" value="P:arginine catabolic process"/>
    <property type="evidence" value="ECO:0000314"/>
    <property type="project" value="PseudoCAP"/>
</dbReference>
<dbReference type="GO" id="GO:0019544">
    <property type="term" value="P:arginine catabolic process to glutamate"/>
    <property type="evidence" value="ECO:0007669"/>
    <property type="project" value="UniProtKB-UniRule"/>
</dbReference>
<dbReference type="GO" id="GO:0019545">
    <property type="term" value="P:arginine catabolic process to succinate"/>
    <property type="evidence" value="ECO:0007669"/>
    <property type="project" value="UniProtKB-UniRule"/>
</dbReference>
<dbReference type="CDD" id="cd07095">
    <property type="entry name" value="ALDH_SGSD_AstD"/>
    <property type="match status" value="1"/>
</dbReference>
<dbReference type="FunFam" id="3.40.309.10:FF:000013">
    <property type="entry name" value="N-succinylglutamate 5-semialdehyde dehydrogenase"/>
    <property type="match status" value="1"/>
</dbReference>
<dbReference type="FunFam" id="3.40.605.10:FF:000010">
    <property type="entry name" value="N-succinylglutamate 5-semialdehyde dehydrogenase"/>
    <property type="match status" value="1"/>
</dbReference>
<dbReference type="Gene3D" id="3.40.605.10">
    <property type="entry name" value="Aldehyde Dehydrogenase, Chain A, domain 1"/>
    <property type="match status" value="1"/>
</dbReference>
<dbReference type="Gene3D" id="3.40.309.10">
    <property type="entry name" value="Aldehyde Dehydrogenase, Chain A, domain 2"/>
    <property type="match status" value="1"/>
</dbReference>
<dbReference type="HAMAP" id="MF_01174">
    <property type="entry name" value="Aldedh_AstD"/>
    <property type="match status" value="1"/>
</dbReference>
<dbReference type="InterPro" id="IPR016161">
    <property type="entry name" value="Ald_DH/histidinol_DH"/>
</dbReference>
<dbReference type="InterPro" id="IPR016163">
    <property type="entry name" value="Ald_DH_C"/>
</dbReference>
<dbReference type="InterPro" id="IPR016160">
    <property type="entry name" value="Ald_DH_CS_CYS"/>
</dbReference>
<dbReference type="InterPro" id="IPR029510">
    <property type="entry name" value="Ald_DH_CS_GLU"/>
</dbReference>
<dbReference type="InterPro" id="IPR016162">
    <property type="entry name" value="Ald_DH_N"/>
</dbReference>
<dbReference type="InterPro" id="IPR015590">
    <property type="entry name" value="Aldehyde_DH_dom"/>
</dbReference>
<dbReference type="InterPro" id="IPR017649">
    <property type="entry name" value="SuccinylGlu_semiald_DH_AstD"/>
</dbReference>
<dbReference type="NCBIfam" id="TIGR03240">
    <property type="entry name" value="arg_catab_astD"/>
    <property type="match status" value="1"/>
</dbReference>
<dbReference type="NCBIfam" id="NF006992">
    <property type="entry name" value="PRK09457.1"/>
    <property type="match status" value="1"/>
</dbReference>
<dbReference type="PANTHER" id="PTHR11699">
    <property type="entry name" value="ALDEHYDE DEHYDROGENASE-RELATED"/>
    <property type="match status" value="1"/>
</dbReference>
<dbReference type="Pfam" id="PF00171">
    <property type="entry name" value="Aldedh"/>
    <property type="match status" value="1"/>
</dbReference>
<dbReference type="SUPFAM" id="SSF53720">
    <property type="entry name" value="ALDH-like"/>
    <property type="match status" value="1"/>
</dbReference>
<dbReference type="PROSITE" id="PS00070">
    <property type="entry name" value="ALDEHYDE_DEHYDR_CYS"/>
    <property type="match status" value="1"/>
</dbReference>
<dbReference type="PROSITE" id="PS00687">
    <property type="entry name" value="ALDEHYDE_DEHYDR_GLU"/>
    <property type="match status" value="1"/>
</dbReference>
<proteinExistence type="evidence at protein level"/>
<feature type="chain" id="PRO_0000056570" description="N-succinylglutamate 5-semialdehyde dehydrogenase">
    <location>
        <begin position="1"/>
        <end position="487"/>
    </location>
</feature>
<feature type="active site" evidence="1">
    <location>
        <position position="244"/>
    </location>
</feature>
<feature type="active site" evidence="1">
    <location>
        <position position="278"/>
    </location>
</feature>
<feature type="binding site" evidence="1">
    <location>
        <begin position="221"/>
        <end position="226"/>
    </location>
    <ligand>
        <name>NAD(+)</name>
        <dbReference type="ChEBI" id="CHEBI:57540"/>
    </ligand>
</feature>
<feature type="strand" evidence="4">
    <location>
        <begin position="4"/>
        <end position="6"/>
    </location>
</feature>
<feature type="strand" evidence="4">
    <location>
        <begin position="9"/>
        <end position="11"/>
    </location>
</feature>
<feature type="strand" evidence="4">
    <location>
        <begin position="17"/>
        <end position="21"/>
    </location>
</feature>
<feature type="turn" evidence="4">
    <location>
        <begin position="23"/>
        <end position="25"/>
    </location>
</feature>
<feature type="strand" evidence="4">
    <location>
        <begin position="28"/>
        <end position="33"/>
    </location>
</feature>
<feature type="helix" evidence="4">
    <location>
        <begin position="37"/>
        <end position="56"/>
    </location>
</feature>
<feature type="helix" evidence="4">
    <location>
        <begin position="59"/>
        <end position="75"/>
    </location>
</feature>
<feature type="helix" evidence="4">
    <location>
        <begin position="77"/>
        <end position="88"/>
    </location>
</feature>
<feature type="helix" evidence="4">
    <location>
        <begin position="92"/>
        <end position="116"/>
    </location>
</feature>
<feature type="strand" evidence="4">
    <location>
        <begin position="120"/>
        <end position="124"/>
    </location>
</feature>
<feature type="strand" evidence="4">
    <location>
        <begin position="127"/>
        <end position="135"/>
    </location>
</feature>
<feature type="strand" evidence="4">
    <location>
        <begin position="137"/>
        <end position="142"/>
    </location>
</feature>
<feature type="strand" evidence="4">
    <location>
        <begin position="145"/>
        <end position="147"/>
    </location>
</feature>
<feature type="helix" evidence="4">
    <location>
        <begin position="150"/>
        <end position="162"/>
    </location>
</feature>
<feature type="strand" evidence="4">
    <location>
        <begin position="165"/>
        <end position="169"/>
    </location>
</feature>
<feature type="helix" evidence="4">
    <location>
        <begin position="175"/>
        <end position="187"/>
    </location>
</feature>
<feature type="turn" evidence="4">
    <location>
        <begin position="192"/>
        <end position="194"/>
    </location>
</feature>
<feature type="strand" evidence="4">
    <location>
        <begin position="195"/>
        <end position="197"/>
    </location>
</feature>
<feature type="helix" evidence="4">
    <location>
        <begin position="202"/>
        <end position="209"/>
    </location>
</feature>
<feature type="strand" evidence="4">
    <location>
        <begin position="215"/>
        <end position="221"/>
    </location>
</feature>
<feature type="helix" evidence="4">
    <location>
        <begin position="223"/>
        <end position="232"/>
    </location>
</feature>
<feature type="turn" evidence="4">
    <location>
        <begin position="233"/>
        <end position="235"/>
    </location>
</feature>
<feature type="strand" evidence="4">
    <location>
        <begin position="239"/>
        <end position="244"/>
    </location>
</feature>
<feature type="strand" evidence="4">
    <location>
        <begin position="249"/>
        <end position="253"/>
    </location>
</feature>
<feature type="helix" evidence="4">
    <location>
        <begin position="259"/>
        <end position="271"/>
    </location>
</feature>
<feature type="helix" evidence="4">
    <location>
        <begin position="272"/>
        <end position="275"/>
    </location>
</feature>
<feature type="strand" evidence="4">
    <location>
        <begin position="280"/>
        <end position="289"/>
    </location>
</feature>
<feature type="helix" evidence="4">
    <location>
        <begin position="290"/>
        <end position="305"/>
    </location>
</feature>
<feature type="helix" evidence="4">
    <location>
        <begin position="325"/>
        <end position="340"/>
    </location>
</feature>
<feature type="strand" evidence="4">
    <location>
        <begin position="344"/>
        <end position="347"/>
    </location>
</feature>
<feature type="strand" evidence="4">
    <location>
        <begin position="362"/>
        <end position="365"/>
    </location>
</feature>
<feature type="strand" evidence="4">
    <location>
        <begin position="379"/>
        <end position="389"/>
    </location>
</feature>
<feature type="helix" evidence="4">
    <location>
        <begin position="390"/>
        <end position="398"/>
    </location>
</feature>
<feature type="strand" evidence="4">
    <location>
        <begin position="404"/>
        <end position="409"/>
    </location>
</feature>
<feature type="helix" evidence="4">
    <location>
        <begin position="413"/>
        <end position="422"/>
    </location>
</feature>
<feature type="strand" evidence="4">
    <location>
        <begin position="425"/>
        <end position="432"/>
    </location>
</feature>
<feature type="strand" evidence="4">
    <location>
        <begin position="441"/>
        <end position="443"/>
    </location>
</feature>
<feature type="helix" evidence="4">
    <location>
        <begin position="447"/>
        <end position="449"/>
    </location>
</feature>
<feature type="strand" evidence="4">
    <location>
        <begin position="450"/>
        <end position="452"/>
    </location>
</feature>
<feature type="helix" evidence="4">
    <location>
        <begin position="459"/>
        <end position="463"/>
    </location>
</feature>
<feature type="strand" evidence="4">
    <location>
        <begin position="464"/>
        <end position="471"/>
    </location>
</feature>
<protein>
    <recommendedName>
        <fullName>N-succinylglutamate 5-semialdehyde dehydrogenase</fullName>
        <ecNumber>1.2.1.71</ecNumber>
    </recommendedName>
    <alternativeName>
        <fullName>Succinylglutamic semialdehyde dehydrogenase</fullName>
        <shortName>SGSD</shortName>
    </alternativeName>
</protein>
<evidence type="ECO:0000250" key="1"/>
<evidence type="ECO:0000269" key="2">
    <source>
    </source>
</evidence>
<evidence type="ECO:0000305" key="3"/>
<evidence type="ECO:0007829" key="4">
    <source>
        <dbReference type="PDB" id="3JU8"/>
    </source>
</evidence>
<name>ASTD_PSEAE</name>
<sequence length="487" mass="51380">MSTHYIAGQWLAGQGETLESLDPVGQGVVWSGRGADATQVDAAVCAAREAFPAWARRPLEQRIELLERFAATLKSRADELARVIGEETGKPLWESATEVTSMVNKVAISVQAFRERTGEKSGPLADATAVLRHKPHGVVAVFGPYNFPGHLPNGHIVPALLAGNCVVFKPSELTPKVAELTLKAWIQAGLPAGVLNLVQGGRETGVALAAHRGLDGLFFTGSSRTGNLLHSQFGGQPQKILALEMGGNNPLVVEEVADLDAAVYTIIQSAFISAGQRCTCARRLLVPQGAWGDALLARLVAVSATLRVGRFDEQPAPFMGAVISLSAAEHLLKAQEHLIGKGAQPLLAMTQPIDGAALLTPGILDVSAVAERPDEEFFGPLLQVIRYSDFAAAIREANATQYGLAAGLLSDSRERFEQFLVESRAGIVNWNKQLTGAASSAPFGGIGASGNHRPSAYYAADYCAYPVASLESPSVSLPATLTPGISL</sequence>
<keyword id="KW-0002">3D-structure</keyword>
<keyword id="KW-0056">Arginine metabolism</keyword>
<keyword id="KW-0520">NAD</keyword>
<keyword id="KW-0560">Oxidoreductase</keyword>
<keyword id="KW-1185">Reference proteome</keyword>
<organism>
    <name type="scientific">Pseudomonas aeruginosa (strain ATCC 15692 / DSM 22644 / CIP 104116 / JCM 14847 / LMG 12228 / 1C / PRS 101 / PAO1)</name>
    <dbReference type="NCBI Taxonomy" id="208964"/>
    <lineage>
        <taxon>Bacteria</taxon>
        <taxon>Pseudomonadati</taxon>
        <taxon>Pseudomonadota</taxon>
        <taxon>Gammaproteobacteria</taxon>
        <taxon>Pseudomonadales</taxon>
        <taxon>Pseudomonadaceae</taxon>
        <taxon>Pseudomonas</taxon>
    </lineage>
</organism>
<accession>O50174</accession>